<reference key="1">
    <citation type="journal article" date="2008" name="J. Bacteriol.">
        <title>Insights into plant cell wall degradation from the genome sequence of the soil bacterium Cellvibrio japonicus.</title>
        <authorList>
            <person name="DeBoy R.T."/>
            <person name="Mongodin E.F."/>
            <person name="Fouts D.E."/>
            <person name="Tailford L.E."/>
            <person name="Khouri H."/>
            <person name="Emerson J.B."/>
            <person name="Mohamoud Y."/>
            <person name="Watkins K."/>
            <person name="Henrissat B."/>
            <person name="Gilbert H.J."/>
            <person name="Nelson K.E."/>
        </authorList>
    </citation>
    <scope>NUCLEOTIDE SEQUENCE [LARGE SCALE GENOMIC DNA]</scope>
    <source>
        <strain>Ueda107</strain>
    </source>
</reference>
<evidence type="ECO:0000255" key="1">
    <source>
        <dbReference type="HAMAP-Rule" id="MF_00686"/>
    </source>
</evidence>
<gene>
    <name type="ordered locus">CJA_0531</name>
</gene>
<proteinExistence type="inferred from homology"/>
<dbReference type="EMBL" id="CP000934">
    <property type="protein sequence ID" value="ACE83149.1"/>
    <property type="molecule type" value="Genomic_DNA"/>
</dbReference>
<dbReference type="RefSeq" id="WP_012486211.1">
    <property type="nucleotide sequence ID" value="NC_010995.1"/>
</dbReference>
<dbReference type="SMR" id="B3PJ20"/>
<dbReference type="STRING" id="498211.CJA_0531"/>
<dbReference type="KEGG" id="cja:CJA_0531"/>
<dbReference type="eggNOG" id="COG2924">
    <property type="taxonomic scope" value="Bacteria"/>
</dbReference>
<dbReference type="HOGENOM" id="CLU_170994_0_0_6"/>
<dbReference type="OrthoDB" id="9804318at2"/>
<dbReference type="Proteomes" id="UP000001036">
    <property type="component" value="Chromosome"/>
</dbReference>
<dbReference type="GO" id="GO:0005829">
    <property type="term" value="C:cytosol"/>
    <property type="evidence" value="ECO:0007669"/>
    <property type="project" value="TreeGrafter"/>
</dbReference>
<dbReference type="GO" id="GO:0005506">
    <property type="term" value="F:iron ion binding"/>
    <property type="evidence" value="ECO:0007669"/>
    <property type="project" value="UniProtKB-UniRule"/>
</dbReference>
<dbReference type="GO" id="GO:0034599">
    <property type="term" value="P:cellular response to oxidative stress"/>
    <property type="evidence" value="ECO:0007669"/>
    <property type="project" value="TreeGrafter"/>
</dbReference>
<dbReference type="FunFam" id="1.10.3880.10:FF:000001">
    <property type="entry name" value="Probable Fe(2+)-trafficking protein"/>
    <property type="match status" value="1"/>
</dbReference>
<dbReference type="Gene3D" id="1.10.3880.10">
    <property type="entry name" value="Fe(II) trafficking protein YggX"/>
    <property type="match status" value="1"/>
</dbReference>
<dbReference type="HAMAP" id="MF_00686">
    <property type="entry name" value="Fe_traffic_YggX"/>
    <property type="match status" value="1"/>
</dbReference>
<dbReference type="InterPro" id="IPR007457">
    <property type="entry name" value="Fe_traffick_prot_YggX"/>
</dbReference>
<dbReference type="InterPro" id="IPR036766">
    <property type="entry name" value="Fe_traffick_prot_YggX_sf"/>
</dbReference>
<dbReference type="NCBIfam" id="NF003817">
    <property type="entry name" value="PRK05408.1"/>
    <property type="match status" value="1"/>
</dbReference>
<dbReference type="PANTHER" id="PTHR36965">
    <property type="entry name" value="FE(2+)-TRAFFICKING PROTEIN-RELATED"/>
    <property type="match status" value="1"/>
</dbReference>
<dbReference type="PANTHER" id="PTHR36965:SF1">
    <property type="entry name" value="FE(2+)-TRAFFICKING PROTEIN-RELATED"/>
    <property type="match status" value="1"/>
</dbReference>
<dbReference type="Pfam" id="PF04362">
    <property type="entry name" value="Iron_traffic"/>
    <property type="match status" value="1"/>
</dbReference>
<dbReference type="PIRSF" id="PIRSF029827">
    <property type="entry name" value="Fe_traffic_YggX"/>
    <property type="match status" value="1"/>
</dbReference>
<dbReference type="SUPFAM" id="SSF111148">
    <property type="entry name" value="YggX-like"/>
    <property type="match status" value="1"/>
</dbReference>
<sequence length="91" mass="10608">MARMVFCRKYKQQLEGLDFPPYPGAKGQDLFDNVSKKAWQEWMAHQTMLINEKRLNVMDMGTKVYLTEQMHKFLSGEGYDQADGYVPPSNQ</sequence>
<name>FETP_CELJU</name>
<protein>
    <recommendedName>
        <fullName evidence="1">Probable Fe(2+)-trafficking protein</fullName>
    </recommendedName>
</protein>
<comment type="function">
    <text evidence="1">Could be a mediator in iron transactions between iron acquisition and iron-requiring processes, such as synthesis and/or repair of Fe-S clusters in biosynthetic enzymes.</text>
</comment>
<comment type="similarity">
    <text evidence="1">Belongs to the Fe(2+)-trafficking protein family.</text>
</comment>
<keyword id="KW-0408">Iron</keyword>
<keyword id="KW-1185">Reference proteome</keyword>
<accession>B3PJ20</accession>
<feature type="chain" id="PRO_1000131834" description="Probable Fe(2+)-trafficking protein">
    <location>
        <begin position="1"/>
        <end position="91"/>
    </location>
</feature>
<organism>
    <name type="scientific">Cellvibrio japonicus (strain Ueda107)</name>
    <name type="common">Pseudomonas fluorescens subsp. cellulosa</name>
    <dbReference type="NCBI Taxonomy" id="498211"/>
    <lineage>
        <taxon>Bacteria</taxon>
        <taxon>Pseudomonadati</taxon>
        <taxon>Pseudomonadota</taxon>
        <taxon>Gammaproteobacteria</taxon>
        <taxon>Cellvibrionales</taxon>
        <taxon>Cellvibrionaceae</taxon>
        <taxon>Cellvibrio</taxon>
    </lineage>
</organism>